<organism>
    <name type="scientific">Mycolicibacterium gilvum (strain PYR-GCK)</name>
    <name type="common">Mycobacterium gilvum (strain PYR-GCK)</name>
    <dbReference type="NCBI Taxonomy" id="350054"/>
    <lineage>
        <taxon>Bacteria</taxon>
        <taxon>Bacillati</taxon>
        <taxon>Actinomycetota</taxon>
        <taxon>Actinomycetes</taxon>
        <taxon>Mycobacteriales</taxon>
        <taxon>Mycobacteriaceae</taxon>
        <taxon>Mycolicibacterium</taxon>
    </lineage>
</organism>
<reference key="1">
    <citation type="submission" date="2007-04" db="EMBL/GenBank/DDBJ databases">
        <title>Complete sequence of chromosome of Mycobacterium gilvum PYR-GCK.</title>
        <authorList>
            <consortium name="US DOE Joint Genome Institute"/>
            <person name="Copeland A."/>
            <person name="Lucas S."/>
            <person name="Lapidus A."/>
            <person name="Barry K."/>
            <person name="Detter J.C."/>
            <person name="Glavina del Rio T."/>
            <person name="Hammon N."/>
            <person name="Israni S."/>
            <person name="Dalin E."/>
            <person name="Tice H."/>
            <person name="Pitluck S."/>
            <person name="Chain P."/>
            <person name="Malfatti S."/>
            <person name="Shin M."/>
            <person name="Vergez L."/>
            <person name="Schmutz J."/>
            <person name="Larimer F."/>
            <person name="Land M."/>
            <person name="Hauser L."/>
            <person name="Kyrpides N."/>
            <person name="Mikhailova N."/>
            <person name="Miller C."/>
            <person name="Richardson P."/>
        </authorList>
    </citation>
    <scope>NUCLEOTIDE SEQUENCE [LARGE SCALE GENOMIC DNA]</scope>
    <source>
        <strain>PYR-GCK</strain>
    </source>
</reference>
<sequence length="309" mass="33720">MSSLRTDDDTWDIASSVGATAVMVAAARAAETERHDALINDPYAKVLVEGAGAGAWRFIADEDLVAKASESDTEVGALFEHMKNYQAVRTHFFDAFFSAAVDAGVRQIVILASGLDSRAFRLPWPAGTVVYEIDQPLVLDYKSSTLAAHGVAPTAERREVPIDLRQDWPAALVATGFDPARPTAWLAEGLLMYLPADAQDRLFAQITELSAPGSQVAAESMGVHAPDRRERMRERFASIASQIDIEPMDITELTYEDPDRAEVAEWLAAHGWTAQAVPSQDAMRRLDRYVEVADSDGQSFSTFTTGTKL</sequence>
<feature type="chain" id="PRO_0000361158" description="Putative S-adenosyl-L-methionine-dependent methyltransferase Mflv_0743">
    <location>
        <begin position="1"/>
        <end position="309"/>
    </location>
</feature>
<feature type="binding site" evidence="1">
    <location>
        <position position="134"/>
    </location>
    <ligand>
        <name>S-adenosyl-L-methionine</name>
        <dbReference type="ChEBI" id="CHEBI:59789"/>
    </ligand>
</feature>
<feature type="binding site" evidence="1">
    <location>
        <begin position="163"/>
        <end position="164"/>
    </location>
    <ligand>
        <name>S-adenosyl-L-methionine</name>
        <dbReference type="ChEBI" id="CHEBI:59789"/>
    </ligand>
</feature>
<proteinExistence type="inferred from homology"/>
<keyword id="KW-0489">Methyltransferase</keyword>
<keyword id="KW-0949">S-adenosyl-L-methionine</keyword>
<keyword id="KW-0808">Transferase</keyword>
<gene>
    <name type="ordered locus">Mflv_0743</name>
</gene>
<dbReference type="EC" id="2.1.1.-"/>
<dbReference type="EMBL" id="CP000656">
    <property type="protein sequence ID" value="ABP43228.1"/>
    <property type="molecule type" value="Genomic_DNA"/>
</dbReference>
<dbReference type="SMR" id="A4T523"/>
<dbReference type="STRING" id="350054.Mflv_0743"/>
<dbReference type="KEGG" id="mgi:Mflv_0743"/>
<dbReference type="eggNOG" id="COG3315">
    <property type="taxonomic scope" value="Bacteria"/>
</dbReference>
<dbReference type="HOGENOM" id="CLU_056160_2_1_11"/>
<dbReference type="OrthoDB" id="9806164at2"/>
<dbReference type="GO" id="GO:0008168">
    <property type="term" value="F:methyltransferase activity"/>
    <property type="evidence" value="ECO:0007669"/>
    <property type="project" value="UniProtKB-KW"/>
</dbReference>
<dbReference type="GO" id="GO:0032259">
    <property type="term" value="P:methylation"/>
    <property type="evidence" value="ECO:0007669"/>
    <property type="project" value="UniProtKB-KW"/>
</dbReference>
<dbReference type="FunFam" id="3.40.50.150:FF:000152">
    <property type="entry name" value="S-adenosyl-L-methionine-dependent methyltransferase"/>
    <property type="match status" value="1"/>
</dbReference>
<dbReference type="Gene3D" id="3.40.50.150">
    <property type="entry name" value="Vaccinia Virus protein VP39"/>
    <property type="match status" value="1"/>
</dbReference>
<dbReference type="InterPro" id="IPR007213">
    <property type="entry name" value="Ppm1/Ppm2/Tcmp"/>
</dbReference>
<dbReference type="InterPro" id="IPR029063">
    <property type="entry name" value="SAM-dependent_MTases_sf"/>
</dbReference>
<dbReference type="InterPro" id="IPR011610">
    <property type="entry name" value="SAM_mthyl_Trfase_ML2640-like"/>
</dbReference>
<dbReference type="NCBIfam" id="TIGR00027">
    <property type="entry name" value="mthyl_TIGR00027"/>
    <property type="match status" value="1"/>
</dbReference>
<dbReference type="PANTHER" id="PTHR43619">
    <property type="entry name" value="S-ADENOSYL-L-METHIONINE-DEPENDENT METHYLTRANSFERASE YKTD-RELATED"/>
    <property type="match status" value="1"/>
</dbReference>
<dbReference type="PANTHER" id="PTHR43619:SF2">
    <property type="entry name" value="S-ADENOSYL-L-METHIONINE-DEPENDENT METHYLTRANSFERASES SUPERFAMILY PROTEIN"/>
    <property type="match status" value="1"/>
</dbReference>
<dbReference type="Pfam" id="PF04072">
    <property type="entry name" value="LCM"/>
    <property type="match status" value="1"/>
</dbReference>
<dbReference type="SUPFAM" id="SSF53335">
    <property type="entry name" value="S-adenosyl-L-methionine-dependent methyltransferases"/>
    <property type="match status" value="1"/>
</dbReference>
<accession>A4T523</accession>
<comment type="function">
    <text evidence="1">Exhibits S-adenosyl-L-methionine-dependent methyltransferase activity.</text>
</comment>
<comment type="similarity">
    <text evidence="2">Belongs to the UPF0677 family.</text>
</comment>
<name>Y743_MYCGI</name>
<protein>
    <recommendedName>
        <fullName>Putative S-adenosyl-L-methionine-dependent methyltransferase Mflv_0743</fullName>
        <ecNumber>2.1.1.-</ecNumber>
    </recommendedName>
</protein>
<evidence type="ECO:0000250" key="1"/>
<evidence type="ECO:0000305" key="2"/>